<sequence>MVYKLVLLFCIASLGYSVEYKNTICPPRQDYRYWYFAAELTIGVNYDINSTIIGECYMSESYIDRNANIVLTGYGLEINMTIMDTDQRFVAAAEGVGKDNKLSVMLFTTQRLDKVHHNISVIITCMEMNCGTTKYNSDLPESIHHKSSCDITINGSCVTCVNLETDPTKINPHYLHPKDKYLYHNSKYGMRGSYGVTFIDELNQCLLDIKELSYDICYRE</sequence>
<organismHost>
    <name type="scientific">Homo sapiens</name>
    <name type="common">Human</name>
    <dbReference type="NCBI Taxonomy" id="9606"/>
</organismHost>
<keyword id="KW-0244">Early protein</keyword>
<keyword id="KW-0325">Glycoprotein</keyword>
<keyword id="KW-1038">Host endoplasmic reticulum</keyword>
<keyword id="KW-0945">Host-virus interaction</keyword>
<keyword id="KW-1100">Inhibition of host NF-kappa-B by virus</keyword>
<keyword id="KW-0964">Secreted</keyword>
<keyword id="KW-0732">Signal</keyword>
<keyword id="KW-0899">Viral immunoevasion</keyword>
<dbReference type="EMBL" id="L22579">
    <property type="protein sequence ID" value="AAA60767.1"/>
    <property type="molecule type" value="Genomic_DNA"/>
</dbReference>
<dbReference type="EMBL" id="U18337">
    <property type="protein sequence ID" value="AAA69324.1"/>
    <property type="molecule type" value="Genomic_DNA"/>
</dbReference>
<dbReference type="PIR" id="T28457">
    <property type="entry name" value="T28457"/>
</dbReference>
<dbReference type="RefSeq" id="NP_042063.1">
    <property type="nucleotide sequence ID" value="NC_001611.1"/>
</dbReference>
<dbReference type="SMR" id="P0DOL8"/>
<dbReference type="GeneID" id="1486479"/>
<dbReference type="KEGG" id="vg:1486479"/>
<dbReference type="Proteomes" id="UP000119805">
    <property type="component" value="Segment"/>
</dbReference>
<dbReference type="GO" id="GO:0005576">
    <property type="term" value="C:extracellular region"/>
    <property type="evidence" value="ECO:0007669"/>
    <property type="project" value="UniProtKB-SubCell"/>
</dbReference>
<dbReference type="GO" id="GO:0044165">
    <property type="term" value="C:host cell endoplasmic reticulum"/>
    <property type="evidence" value="ECO:0007669"/>
    <property type="project" value="UniProtKB-SubCell"/>
</dbReference>
<dbReference type="GO" id="GO:0085034">
    <property type="term" value="P:symbiont-mediated suppression of host NF-kappaB cascade"/>
    <property type="evidence" value="ECO:0007669"/>
    <property type="project" value="UniProtKB-KW"/>
</dbReference>
<dbReference type="InterPro" id="IPR006971">
    <property type="entry name" value="Poxvirus_M2"/>
</dbReference>
<dbReference type="Pfam" id="PF04887">
    <property type="entry name" value="Pox_M2"/>
    <property type="match status" value="1"/>
</dbReference>
<dbReference type="PIRSF" id="PIRSF015982">
    <property type="entry name" value="VAC_M2L"/>
    <property type="match status" value="1"/>
</dbReference>
<proteinExistence type="inferred from homology"/>
<gene>
    <name type="primary">OPG038</name>
    <name type="ORF">M2L</name>
    <name type="ORF">O2L</name>
</gene>
<protein>
    <recommendedName>
        <fullName>Early protein OPG038</fullName>
    </recommendedName>
    <alternativeName>
        <fullName>Protein M2</fullName>
    </alternativeName>
</protein>
<organism>
    <name type="scientific">Variola virus</name>
    <dbReference type="NCBI Taxonomy" id="10255"/>
    <lineage>
        <taxon>Viruses</taxon>
        <taxon>Varidnaviria</taxon>
        <taxon>Bamfordvirae</taxon>
        <taxon>Nucleocytoviricota</taxon>
        <taxon>Pokkesviricetes</taxon>
        <taxon>Chitovirales</taxon>
        <taxon>Poxviridae</taxon>
        <taxon>Chordopoxvirinae</taxon>
        <taxon>Orthopoxvirus</taxon>
    </lineage>
</organism>
<feature type="signal peptide" evidence="2">
    <location>
        <begin position="1"/>
        <end position="17"/>
    </location>
</feature>
<feature type="chain" id="PRO_0000448208" description="Early protein OPG038">
    <location>
        <begin position="18"/>
        <end position="220"/>
    </location>
</feature>
<reference key="1">
    <citation type="journal article" date="1993" name="Nature">
        <title>Potential virulence determinants in terminal regions of variola smallpox virus genome.</title>
        <authorList>
            <person name="Massung R.F."/>
            <person name="Esposito J.J."/>
            <person name="Liu L.I."/>
            <person name="Qi J."/>
            <person name="Utterback T.R."/>
            <person name="Knight J.C."/>
            <person name="Aubin L."/>
            <person name="Yuran T.E."/>
            <person name="Parsons J.M."/>
            <person name="Loparev V.N."/>
            <person name="Selivanov N.A."/>
            <person name="Cavallaro K.F."/>
            <person name="Kerlavage A.R."/>
            <person name="Mahy B.W.J."/>
            <person name="Venter J.C."/>
        </authorList>
    </citation>
    <scope>NUCLEOTIDE SEQUENCE [GENOMIC DNA]</scope>
    <source>
        <strain>Bangladesh-1975</strain>
    </source>
</reference>
<reference key="2">
    <citation type="submission" date="1994-12" db="EMBL/GenBank/DDBJ databases">
        <authorList>
            <person name="Massung R.F."/>
            <person name="Loparev V.N."/>
            <person name="Knight J.C."/>
            <person name="Chizhikov V.E."/>
            <person name="Parsons J.M."/>
            <person name="Totmenin A.V."/>
            <person name="Shchelkunov S.N."/>
            <person name="Esposito J.J."/>
        </authorList>
    </citation>
    <scope>NUCLEOTIDE SEQUENCE [GENOMIC DNA]</scope>
    <source>
        <strain>Congo-1965</strain>
    </source>
</reference>
<evidence type="ECO:0000250" key="1">
    <source>
        <dbReference type="UniProtKB" id="Q80HY2"/>
    </source>
</evidence>
<evidence type="ECO:0000255" key="2"/>
<evidence type="ECO:0000305" key="3"/>
<comment type="function">
    <text evidence="1">Plays a role in immune evasion. When secreted, inhibits T-cell activation by preventing the binding of host CD80 and CD86 to soluble CTLA4 and CD28. In the infected cell, may inhibits host NF kappa B activation.</text>
</comment>
<comment type="subunit">
    <text evidence="1">Homooligomer. Interacts with host CD80 and CD86 when secreted.</text>
</comment>
<comment type="subcellular location">
    <subcellularLocation>
        <location evidence="1">Host endoplasmic reticulum</location>
    </subcellularLocation>
    <subcellularLocation>
        <location evidence="1">Secreted</location>
    </subcellularLocation>
</comment>
<comment type="induction">
    <text evidence="1">Expressed in the early phase of the viral replicative cycle.</text>
</comment>
<comment type="PTM">
    <text evidence="1">Glycosylated by host.</text>
</comment>
<comment type="similarity">
    <text evidence="3">Belongs to the orthopoxvirus OPG038 family.</text>
</comment>
<name>PG038_VARV</name>
<accession>P0DOL8</accession>
<accession>P34017</accession>